<keyword id="KW-0067">ATP-binding</keyword>
<keyword id="KW-0963">Cytoplasm</keyword>
<keyword id="KW-0418">Kinase</keyword>
<keyword id="KW-0547">Nucleotide-binding</keyword>
<keyword id="KW-0808">Transferase</keyword>
<proteinExistence type="inferred from homology"/>
<comment type="catalytic activity">
    <reaction evidence="1">
        <text>CMP + ATP = CDP + ADP</text>
        <dbReference type="Rhea" id="RHEA:11600"/>
        <dbReference type="ChEBI" id="CHEBI:30616"/>
        <dbReference type="ChEBI" id="CHEBI:58069"/>
        <dbReference type="ChEBI" id="CHEBI:60377"/>
        <dbReference type="ChEBI" id="CHEBI:456216"/>
        <dbReference type="EC" id="2.7.4.25"/>
    </reaction>
</comment>
<comment type="catalytic activity">
    <reaction evidence="1">
        <text>dCMP + ATP = dCDP + ADP</text>
        <dbReference type="Rhea" id="RHEA:25094"/>
        <dbReference type="ChEBI" id="CHEBI:30616"/>
        <dbReference type="ChEBI" id="CHEBI:57566"/>
        <dbReference type="ChEBI" id="CHEBI:58593"/>
        <dbReference type="ChEBI" id="CHEBI:456216"/>
        <dbReference type="EC" id="2.7.4.25"/>
    </reaction>
</comment>
<comment type="subcellular location">
    <subcellularLocation>
        <location evidence="1">Cytoplasm</location>
    </subcellularLocation>
</comment>
<comment type="similarity">
    <text evidence="1">Belongs to the cytidylate kinase family. Type 1 subfamily.</text>
</comment>
<dbReference type="EC" id="2.7.4.25" evidence="1"/>
<dbReference type="EMBL" id="CP000026">
    <property type="protein sequence ID" value="AAV77733.1"/>
    <property type="molecule type" value="Genomic_DNA"/>
</dbReference>
<dbReference type="RefSeq" id="WP_000125004.1">
    <property type="nucleotide sequence ID" value="NC_006511.1"/>
</dbReference>
<dbReference type="SMR" id="Q5PGG7"/>
<dbReference type="KEGG" id="spt:SPA1818"/>
<dbReference type="HOGENOM" id="CLU_079959_0_2_6"/>
<dbReference type="Proteomes" id="UP000008185">
    <property type="component" value="Chromosome"/>
</dbReference>
<dbReference type="GO" id="GO:0005829">
    <property type="term" value="C:cytosol"/>
    <property type="evidence" value="ECO:0007669"/>
    <property type="project" value="TreeGrafter"/>
</dbReference>
<dbReference type="GO" id="GO:0005524">
    <property type="term" value="F:ATP binding"/>
    <property type="evidence" value="ECO:0007669"/>
    <property type="project" value="UniProtKB-UniRule"/>
</dbReference>
<dbReference type="GO" id="GO:0036430">
    <property type="term" value="F:CMP kinase activity"/>
    <property type="evidence" value="ECO:0007669"/>
    <property type="project" value="RHEA"/>
</dbReference>
<dbReference type="GO" id="GO:0036431">
    <property type="term" value="F:dCMP kinase activity"/>
    <property type="evidence" value="ECO:0007669"/>
    <property type="project" value="RHEA"/>
</dbReference>
<dbReference type="GO" id="GO:0015949">
    <property type="term" value="P:nucleobase-containing small molecule interconversion"/>
    <property type="evidence" value="ECO:0007669"/>
    <property type="project" value="TreeGrafter"/>
</dbReference>
<dbReference type="GO" id="GO:0006220">
    <property type="term" value="P:pyrimidine nucleotide metabolic process"/>
    <property type="evidence" value="ECO:0007669"/>
    <property type="project" value="UniProtKB-UniRule"/>
</dbReference>
<dbReference type="CDD" id="cd02020">
    <property type="entry name" value="CMPK"/>
    <property type="match status" value="1"/>
</dbReference>
<dbReference type="FunFam" id="3.40.50.300:FF:000262">
    <property type="entry name" value="Cytidylate kinase"/>
    <property type="match status" value="1"/>
</dbReference>
<dbReference type="Gene3D" id="3.40.50.300">
    <property type="entry name" value="P-loop containing nucleotide triphosphate hydrolases"/>
    <property type="match status" value="1"/>
</dbReference>
<dbReference type="HAMAP" id="MF_00238">
    <property type="entry name" value="Cytidyl_kinase_type1"/>
    <property type="match status" value="1"/>
</dbReference>
<dbReference type="InterPro" id="IPR003136">
    <property type="entry name" value="Cytidylate_kin"/>
</dbReference>
<dbReference type="InterPro" id="IPR011994">
    <property type="entry name" value="Cytidylate_kinase_dom"/>
</dbReference>
<dbReference type="InterPro" id="IPR027417">
    <property type="entry name" value="P-loop_NTPase"/>
</dbReference>
<dbReference type="NCBIfam" id="TIGR00017">
    <property type="entry name" value="cmk"/>
    <property type="match status" value="1"/>
</dbReference>
<dbReference type="PANTHER" id="PTHR21299:SF2">
    <property type="entry name" value="CYTIDYLATE KINASE"/>
    <property type="match status" value="1"/>
</dbReference>
<dbReference type="PANTHER" id="PTHR21299">
    <property type="entry name" value="CYTIDYLATE KINASE/PANTOATE-BETA-ALANINE LIGASE"/>
    <property type="match status" value="1"/>
</dbReference>
<dbReference type="Pfam" id="PF02224">
    <property type="entry name" value="Cytidylate_kin"/>
    <property type="match status" value="1"/>
</dbReference>
<dbReference type="SUPFAM" id="SSF52540">
    <property type="entry name" value="P-loop containing nucleoside triphosphate hydrolases"/>
    <property type="match status" value="1"/>
</dbReference>
<reference key="1">
    <citation type="journal article" date="2004" name="Nat. Genet.">
        <title>Comparison of genome degradation in Paratyphi A and Typhi, human-restricted serovars of Salmonella enterica that cause typhoid.</title>
        <authorList>
            <person name="McClelland M."/>
            <person name="Sanderson K.E."/>
            <person name="Clifton S.W."/>
            <person name="Latreille P."/>
            <person name="Porwollik S."/>
            <person name="Sabo A."/>
            <person name="Meyer R."/>
            <person name="Bieri T."/>
            <person name="Ozersky P."/>
            <person name="McLellan M."/>
            <person name="Harkins C.R."/>
            <person name="Wang C."/>
            <person name="Nguyen C."/>
            <person name="Berghoff A."/>
            <person name="Elliott G."/>
            <person name="Kohlberg S."/>
            <person name="Strong C."/>
            <person name="Du F."/>
            <person name="Carter J."/>
            <person name="Kremizki C."/>
            <person name="Layman D."/>
            <person name="Leonard S."/>
            <person name="Sun H."/>
            <person name="Fulton L."/>
            <person name="Nash W."/>
            <person name="Miner T."/>
            <person name="Minx P."/>
            <person name="Delehaunty K."/>
            <person name="Fronick C."/>
            <person name="Magrini V."/>
            <person name="Nhan M."/>
            <person name="Warren W."/>
            <person name="Florea L."/>
            <person name="Spieth J."/>
            <person name="Wilson R.K."/>
        </authorList>
    </citation>
    <scope>NUCLEOTIDE SEQUENCE [LARGE SCALE GENOMIC DNA]</scope>
    <source>
        <strain>ATCC 9150 / SARB42</strain>
    </source>
</reference>
<protein>
    <recommendedName>
        <fullName evidence="1">Cytidylate kinase</fullName>
        <shortName evidence="1">CK</shortName>
        <ecNumber evidence="1">2.7.4.25</ecNumber>
    </recommendedName>
    <alternativeName>
        <fullName evidence="1">Cytidine monophosphate kinase</fullName>
        <shortName evidence="1">CMP kinase</shortName>
    </alternativeName>
</protein>
<evidence type="ECO:0000255" key="1">
    <source>
        <dbReference type="HAMAP-Rule" id="MF_00238"/>
    </source>
</evidence>
<sequence>MTAIAPVITIDGPSGAGKGTLCKAMAEALQWHLLDSGAIYRVLALAALHHHVDLASEDALVPLASHLDVRFVSTDGNLEVILEGEDVSGEIRTQEVANAASQVAAFPRVREALLRRQRAFREAPGLIADGRDMGTVVFPDAPVKIFLDASSEERAHRRMLQLQENGFSVNFEHLLAEIKERDDRDRNRAVAPLVPAADALVLDSTRLSIEQVIEKALQYARQKLALA</sequence>
<accession>Q5PGG7</accession>
<gene>
    <name evidence="1" type="primary">cmk</name>
    <name type="ordered locus">SPA1818</name>
</gene>
<name>KCY_SALPA</name>
<feature type="chain" id="PRO_1000048269" description="Cytidylate kinase">
    <location>
        <begin position="1"/>
        <end position="227"/>
    </location>
</feature>
<feature type="binding site" evidence="1">
    <location>
        <begin position="12"/>
        <end position="20"/>
    </location>
    <ligand>
        <name>ATP</name>
        <dbReference type="ChEBI" id="CHEBI:30616"/>
    </ligand>
</feature>
<organism>
    <name type="scientific">Salmonella paratyphi A (strain ATCC 9150 / SARB42)</name>
    <dbReference type="NCBI Taxonomy" id="295319"/>
    <lineage>
        <taxon>Bacteria</taxon>
        <taxon>Pseudomonadati</taxon>
        <taxon>Pseudomonadota</taxon>
        <taxon>Gammaproteobacteria</taxon>
        <taxon>Enterobacterales</taxon>
        <taxon>Enterobacteriaceae</taxon>
        <taxon>Salmonella</taxon>
    </lineage>
</organism>